<accession>P54653</accession>
<accession>Q55G67</accession>
<protein>
    <recommendedName>
        <fullName>Calcium-binding protein 2</fullName>
    </recommendedName>
</protein>
<comment type="function">
    <text>Not known; probably binds four calcium ions.</text>
</comment>
<comment type="developmental stage">
    <text evidence="2">More abundant in developing cells.</text>
</comment>
<organism>
    <name type="scientific">Dictyostelium discoideum</name>
    <name type="common">Social amoeba</name>
    <dbReference type="NCBI Taxonomy" id="44689"/>
    <lineage>
        <taxon>Eukaryota</taxon>
        <taxon>Amoebozoa</taxon>
        <taxon>Evosea</taxon>
        <taxon>Eumycetozoa</taxon>
        <taxon>Dictyostelia</taxon>
        <taxon>Dictyosteliales</taxon>
        <taxon>Dictyosteliaceae</taxon>
        <taxon>Dictyostelium</taxon>
    </lineage>
</organism>
<dbReference type="EMBL" id="U55379">
    <property type="protein sequence ID" value="AAC47039.1"/>
    <property type="molecule type" value="Genomic_DNA"/>
</dbReference>
<dbReference type="EMBL" id="AAFI02000003">
    <property type="protein sequence ID" value="EAL73181.1"/>
    <property type="molecule type" value="Genomic_DNA"/>
</dbReference>
<dbReference type="PIR" id="S62881">
    <property type="entry name" value="S62881"/>
</dbReference>
<dbReference type="RefSeq" id="XP_647316.1">
    <property type="nucleotide sequence ID" value="XM_642224.1"/>
</dbReference>
<dbReference type="SMR" id="P54653"/>
<dbReference type="BioGRID" id="1241130">
    <property type="interactions" value="1"/>
</dbReference>
<dbReference type="FunCoup" id="P54653">
    <property type="interactions" value="2"/>
</dbReference>
<dbReference type="PaxDb" id="44689-DDB0191196"/>
<dbReference type="EnsemblProtists" id="EAL73181">
    <property type="protein sequence ID" value="EAL73181"/>
    <property type="gene ID" value="DDB_G0267456"/>
</dbReference>
<dbReference type="GeneID" id="8616127"/>
<dbReference type="KEGG" id="ddi:DDB_G0267456"/>
<dbReference type="dictyBase" id="DDB_G0267456">
    <property type="gene designation" value="cbp2"/>
</dbReference>
<dbReference type="VEuPathDB" id="AmoebaDB:DDB_G0267456"/>
<dbReference type="eggNOG" id="ENOG502RIMZ">
    <property type="taxonomic scope" value="Eukaryota"/>
</dbReference>
<dbReference type="HOGENOM" id="CLU_1589454_0_0_1"/>
<dbReference type="InParanoid" id="P54653"/>
<dbReference type="OMA" id="RIVRMND"/>
<dbReference type="PhylomeDB" id="P54653"/>
<dbReference type="PRO" id="PR:P54653"/>
<dbReference type="Proteomes" id="UP000002195">
    <property type="component" value="Chromosome 1"/>
</dbReference>
<dbReference type="GO" id="GO:0005509">
    <property type="term" value="F:calcium ion binding"/>
    <property type="evidence" value="ECO:0000314"/>
    <property type="project" value="dictyBase"/>
</dbReference>
<dbReference type="CDD" id="cd00051">
    <property type="entry name" value="EFh"/>
    <property type="match status" value="1"/>
</dbReference>
<dbReference type="Gene3D" id="1.10.238.10">
    <property type="entry name" value="EF-hand"/>
    <property type="match status" value="2"/>
</dbReference>
<dbReference type="InterPro" id="IPR011992">
    <property type="entry name" value="EF-hand-dom_pair"/>
</dbReference>
<dbReference type="InterPro" id="IPR018247">
    <property type="entry name" value="EF_Hand_1_Ca_BS"/>
</dbReference>
<dbReference type="InterPro" id="IPR002048">
    <property type="entry name" value="EF_hand_dom"/>
</dbReference>
<dbReference type="Pfam" id="PF13202">
    <property type="entry name" value="EF-hand_5"/>
    <property type="match status" value="1"/>
</dbReference>
<dbReference type="Pfam" id="PF13499">
    <property type="entry name" value="EF-hand_7"/>
    <property type="match status" value="1"/>
</dbReference>
<dbReference type="SMART" id="SM00054">
    <property type="entry name" value="EFh"/>
    <property type="match status" value="3"/>
</dbReference>
<dbReference type="SUPFAM" id="SSF47473">
    <property type="entry name" value="EF-hand"/>
    <property type="match status" value="1"/>
</dbReference>
<dbReference type="PROSITE" id="PS00018">
    <property type="entry name" value="EF_HAND_1"/>
    <property type="match status" value="3"/>
</dbReference>
<dbReference type="PROSITE" id="PS50222">
    <property type="entry name" value="EF_HAND_2"/>
    <property type="match status" value="4"/>
</dbReference>
<sequence>MSATVHYKDIRKGMEKDLESLFKKYDSDRNGKITYIEIVETLRKAGKKNPERIADLLFRDDTDKNGELTIEEAKLRIVRMNDEKIEKVLNWDVEKFINDNDKDGDRKITRDEVLQRFTEQGAEDPELITDSIFRQMDLDRDGVITCDEIKEFNRKKKFSFLKSSAPKQ</sequence>
<reference key="1">
    <citation type="journal article" date="1996" name="FEBS Lett.">
        <title>Dictyostelium discoideum contains a family of calmodulin-related EF-hand proteins that are developmentally regulated.</title>
        <authorList>
            <person name="Andre B."/>
            <person name="Noegel A.A."/>
            <person name="Schleicher M."/>
        </authorList>
    </citation>
    <scope>NUCLEOTIDE SEQUENCE [GENOMIC DNA]</scope>
    <scope>DEVELOPMENTAL STAGE</scope>
    <source>
        <strain>AX2</strain>
    </source>
</reference>
<reference key="2">
    <citation type="journal article" date="2005" name="Nature">
        <title>The genome of the social amoeba Dictyostelium discoideum.</title>
        <authorList>
            <person name="Eichinger L."/>
            <person name="Pachebat J.A."/>
            <person name="Gloeckner G."/>
            <person name="Rajandream M.A."/>
            <person name="Sucgang R."/>
            <person name="Berriman M."/>
            <person name="Song J."/>
            <person name="Olsen R."/>
            <person name="Szafranski K."/>
            <person name="Xu Q."/>
            <person name="Tunggal B."/>
            <person name="Kummerfeld S."/>
            <person name="Madera M."/>
            <person name="Konfortov B.A."/>
            <person name="Rivero F."/>
            <person name="Bankier A.T."/>
            <person name="Lehmann R."/>
            <person name="Hamlin N."/>
            <person name="Davies R."/>
            <person name="Gaudet P."/>
            <person name="Fey P."/>
            <person name="Pilcher K."/>
            <person name="Chen G."/>
            <person name="Saunders D."/>
            <person name="Sodergren E.J."/>
            <person name="Davis P."/>
            <person name="Kerhornou A."/>
            <person name="Nie X."/>
            <person name="Hall N."/>
            <person name="Anjard C."/>
            <person name="Hemphill L."/>
            <person name="Bason N."/>
            <person name="Farbrother P."/>
            <person name="Desany B."/>
            <person name="Just E."/>
            <person name="Morio T."/>
            <person name="Rost R."/>
            <person name="Churcher C.M."/>
            <person name="Cooper J."/>
            <person name="Haydock S."/>
            <person name="van Driessche N."/>
            <person name="Cronin A."/>
            <person name="Goodhead I."/>
            <person name="Muzny D.M."/>
            <person name="Mourier T."/>
            <person name="Pain A."/>
            <person name="Lu M."/>
            <person name="Harper D."/>
            <person name="Lindsay R."/>
            <person name="Hauser H."/>
            <person name="James K.D."/>
            <person name="Quiles M."/>
            <person name="Madan Babu M."/>
            <person name="Saito T."/>
            <person name="Buchrieser C."/>
            <person name="Wardroper A."/>
            <person name="Felder M."/>
            <person name="Thangavelu M."/>
            <person name="Johnson D."/>
            <person name="Knights A."/>
            <person name="Loulseged H."/>
            <person name="Mungall K.L."/>
            <person name="Oliver K."/>
            <person name="Price C."/>
            <person name="Quail M.A."/>
            <person name="Urushihara H."/>
            <person name="Hernandez J."/>
            <person name="Rabbinowitsch E."/>
            <person name="Steffen D."/>
            <person name="Sanders M."/>
            <person name="Ma J."/>
            <person name="Kohara Y."/>
            <person name="Sharp S."/>
            <person name="Simmonds M.N."/>
            <person name="Spiegler S."/>
            <person name="Tivey A."/>
            <person name="Sugano S."/>
            <person name="White B."/>
            <person name="Walker D."/>
            <person name="Woodward J.R."/>
            <person name="Winckler T."/>
            <person name="Tanaka Y."/>
            <person name="Shaulsky G."/>
            <person name="Schleicher M."/>
            <person name="Weinstock G.M."/>
            <person name="Rosenthal A."/>
            <person name="Cox E.C."/>
            <person name="Chisholm R.L."/>
            <person name="Gibbs R.A."/>
            <person name="Loomis W.F."/>
            <person name="Platzer M."/>
            <person name="Kay R.R."/>
            <person name="Williams J.G."/>
            <person name="Dear P.H."/>
            <person name="Noegel A.A."/>
            <person name="Barrell B.G."/>
            <person name="Kuspa A."/>
        </authorList>
    </citation>
    <scope>NUCLEOTIDE SEQUENCE [LARGE SCALE GENOMIC DNA]</scope>
    <source>
        <strain>AX4</strain>
    </source>
</reference>
<gene>
    <name type="primary">cbp2</name>
    <name type="synonym">cbpC</name>
    <name type="ORF">DDB_G0267456</name>
</gene>
<proteinExistence type="evidence at transcript level"/>
<name>CBP2_DICDI</name>
<keyword id="KW-0106">Calcium</keyword>
<keyword id="KW-0479">Metal-binding</keyword>
<keyword id="KW-1185">Reference proteome</keyword>
<keyword id="KW-0677">Repeat</keyword>
<feature type="chain" id="PRO_0000073852" description="Calcium-binding protein 2">
    <location>
        <begin position="1"/>
        <end position="168"/>
    </location>
</feature>
<feature type="domain" description="EF-hand 1" evidence="1">
    <location>
        <begin position="13"/>
        <end position="48"/>
    </location>
</feature>
<feature type="domain" description="EF-hand 2" evidence="1">
    <location>
        <begin position="48"/>
        <end position="83"/>
    </location>
</feature>
<feature type="domain" description="EF-hand 3" evidence="1">
    <location>
        <begin position="88"/>
        <end position="123"/>
    </location>
</feature>
<feature type="domain" description="EF-hand 4" evidence="1">
    <location>
        <begin position="124"/>
        <end position="159"/>
    </location>
</feature>
<feature type="binding site" evidence="1">
    <location>
        <position position="26"/>
    </location>
    <ligand>
        <name>Ca(2+)</name>
        <dbReference type="ChEBI" id="CHEBI:29108"/>
        <label>1</label>
    </ligand>
</feature>
<feature type="binding site" evidence="1">
    <location>
        <position position="28"/>
    </location>
    <ligand>
        <name>Ca(2+)</name>
        <dbReference type="ChEBI" id="CHEBI:29108"/>
        <label>1</label>
    </ligand>
</feature>
<feature type="binding site" evidence="1">
    <location>
        <position position="30"/>
    </location>
    <ligand>
        <name>Ca(2+)</name>
        <dbReference type="ChEBI" id="CHEBI:29108"/>
        <label>1</label>
    </ligand>
</feature>
<feature type="binding site" evidence="1">
    <location>
        <position position="32"/>
    </location>
    <ligand>
        <name>Ca(2+)</name>
        <dbReference type="ChEBI" id="CHEBI:29108"/>
        <label>1</label>
    </ligand>
</feature>
<feature type="binding site" evidence="1">
    <location>
        <position position="37"/>
    </location>
    <ligand>
        <name>Ca(2+)</name>
        <dbReference type="ChEBI" id="CHEBI:29108"/>
        <label>1</label>
    </ligand>
</feature>
<feature type="binding site" evidence="3">
    <location>
        <position position="61"/>
    </location>
    <ligand>
        <name>Ca(2+)</name>
        <dbReference type="ChEBI" id="CHEBI:29108"/>
        <label>2</label>
    </ligand>
</feature>
<feature type="binding site" evidence="3">
    <location>
        <position position="63"/>
    </location>
    <ligand>
        <name>Ca(2+)</name>
        <dbReference type="ChEBI" id="CHEBI:29108"/>
        <label>2</label>
    </ligand>
</feature>
<feature type="binding site" evidence="3">
    <location>
        <position position="65"/>
    </location>
    <ligand>
        <name>Ca(2+)</name>
        <dbReference type="ChEBI" id="CHEBI:29108"/>
        <label>2</label>
    </ligand>
</feature>
<feature type="binding site" evidence="3">
    <location>
        <position position="67"/>
    </location>
    <ligand>
        <name>Ca(2+)</name>
        <dbReference type="ChEBI" id="CHEBI:29108"/>
        <label>2</label>
    </ligand>
</feature>
<feature type="binding site" evidence="3">
    <location>
        <position position="72"/>
    </location>
    <ligand>
        <name>Ca(2+)</name>
        <dbReference type="ChEBI" id="CHEBI:29108"/>
        <label>2</label>
    </ligand>
</feature>
<feature type="binding site" evidence="1">
    <location>
        <position position="101"/>
    </location>
    <ligand>
        <name>Ca(2+)</name>
        <dbReference type="ChEBI" id="CHEBI:29108"/>
        <label>3</label>
    </ligand>
</feature>
<feature type="binding site" evidence="1">
    <location>
        <position position="103"/>
    </location>
    <ligand>
        <name>Ca(2+)</name>
        <dbReference type="ChEBI" id="CHEBI:29108"/>
        <label>3</label>
    </ligand>
</feature>
<feature type="binding site" evidence="1">
    <location>
        <position position="105"/>
    </location>
    <ligand>
        <name>Ca(2+)</name>
        <dbReference type="ChEBI" id="CHEBI:29108"/>
        <label>3</label>
    </ligand>
</feature>
<feature type="binding site" evidence="1">
    <location>
        <position position="107"/>
    </location>
    <ligand>
        <name>Ca(2+)</name>
        <dbReference type="ChEBI" id="CHEBI:29108"/>
        <label>3</label>
    </ligand>
</feature>
<feature type="binding site" evidence="1">
    <location>
        <position position="112"/>
    </location>
    <ligand>
        <name>Ca(2+)</name>
        <dbReference type="ChEBI" id="CHEBI:29108"/>
        <label>3</label>
    </ligand>
</feature>
<feature type="binding site" evidence="1">
    <location>
        <position position="137"/>
    </location>
    <ligand>
        <name>Ca(2+)</name>
        <dbReference type="ChEBI" id="CHEBI:29108"/>
        <label>4</label>
    </ligand>
</feature>
<feature type="binding site" evidence="1">
    <location>
        <position position="139"/>
    </location>
    <ligand>
        <name>Ca(2+)</name>
        <dbReference type="ChEBI" id="CHEBI:29108"/>
        <label>4</label>
    </ligand>
</feature>
<feature type="binding site" evidence="1">
    <location>
        <position position="141"/>
    </location>
    <ligand>
        <name>Ca(2+)</name>
        <dbReference type="ChEBI" id="CHEBI:29108"/>
        <label>4</label>
    </ligand>
</feature>
<feature type="binding site" evidence="1">
    <location>
        <position position="148"/>
    </location>
    <ligand>
        <name>Ca(2+)</name>
        <dbReference type="ChEBI" id="CHEBI:29108"/>
        <label>4</label>
    </ligand>
</feature>
<evidence type="ECO:0000255" key="1">
    <source>
        <dbReference type="PROSITE-ProRule" id="PRU00448"/>
    </source>
</evidence>
<evidence type="ECO:0000269" key="2">
    <source>
    </source>
</evidence>
<evidence type="ECO:0000305" key="3"/>